<reference key="1">
    <citation type="journal article" date="2005" name="Infect. Immun.">
        <title>Comparative genomic analysis of Chlamydia trachomatis oculotropic and genitotropic strains.</title>
        <authorList>
            <person name="Carlson J.H."/>
            <person name="Porcella S.F."/>
            <person name="McClarty G."/>
            <person name="Caldwell H.D."/>
        </authorList>
    </citation>
    <scope>NUCLEOTIDE SEQUENCE [LARGE SCALE GENOMIC DNA]</scope>
    <source>
        <strain>ATCC VR-571B / DSM 19440 / HAR-13</strain>
    </source>
</reference>
<name>TIG_CHLTA</name>
<keyword id="KW-0131">Cell cycle</keyword>
<keyword id="KW-0132">Cell division</keyword>
<keyword id="KW-0143">Chaperone</keyword>
<keyword id="KW-0963">Cytoplasm</keyword>
<keyword id="KW-0413">Isomerase</keyword>
<keyword id="KW-0697">Rotamase</keyword>
<sequence length="442" mass="50069">MSSRDFSNDLFSINIEENAGCVVSAKVQANPLVTQKCHKEALKTVKKNVVLPGFRKGKAPDNIVESRYSTQVEQELRRLFLRASFEALSQMCDRKPLSPKAVRSSAIDTCNPVNGGSVSFLYEAFPVIPSLPWEQLSLPDPEPVKEISEEDLENGLKNVAYFFATKTPVTRPSQEGDFISLSLYVSKRGDENSTPVAIFENKYFKISEEDMTDSFKARFLNVSTGHRVEEEIGSEDIQSFLNGDLLTFTVNAVIEISSPEMDDEKARQLQAESLEDLKKKLRIQLENQAKEAQHQKRFSDAEDALAQLIDFDLPESLLQEREELLSREKLLNARLVKYCSDSELEEQKQALLEEAKADARKAVKLLFLTQKVFSEKGLSISREELQYMMDVCSRERFGGYPPKDISNEMIQELVLVARDRLTYRKAIEAISSEKKDLEVVPS</sequence>
<feature type="chain" id="PRO_0000256540" description="Trigger factor">
    <location>
        <begin position="1"/>
        <end position="442"/>
    </location>
</feature>
<feature type="domain" description="PPIase FKBP-type" evidence="1">
    <location>
        <begin position="176"/>
        <end position="259"/>
    </location>
</feature>
<proteinExistence type="inferred from homology"/>
<accession>Q3KKY7</accession>
<organism>
    <name type="scientific">Chlamydia trachomatis serovar A (strain ATCC VR-571B / DSM 19440 / HAR-13)</name>
    <dbReference type="NCBI Taxonomy" id="315277"/>
    <lineage>
        <taxon>Bacteria</taxon>
        <taxon>Pseudomonadati</taxon>
        <taxon>Chlamydiota</taxon>
        <taxon>Chlamydiia</taxon>
        <taxon>Chlamydiales</taxon>
        <taxon>Chlamydiaceae</taxon>
        <taxon>Chlamydia/Chlamydophila group</taxon>
        <taxon>Chlamydia</taxon>
    </lineage>
</organism>
<gene>
    <name evidence="1" type="primary">tig</name>
    <name type="ordered locus">CTA_0768</name>
</gene>
<dbReference type="EC" id="5.2.1.8" evidence="1"/>
<dbReference type="EMBL" id="CP000051">
    <property type="protein sequence ID" value="AAX50985.1"/>
    <property type="molecule type" value="Genomic_DNA"/>
</dbReference>
<dbReference type="RefSeq" id="WP_009872082.1">
    <property type="nucleotide sequence ID" value="NC_007429.1"/>
</dbReference>
<dbReference type="SMR" id="Q3KKY7"/>
<dbReference type="KEGG" id="cta:CTA_0768"/>
<dbReference type="HOGENOM" id="CLU_065756_0_0_0"/>
<dbReference type="Proteomes" id="UP000002532">
    <property type="component" value="Chromosome"/>
</dbReference>
<dbReference type="GO" id="GO:0005737">
    <property type="term" value="C:cytoplasm"/>
    <property type="evidence" value="ECO:0007669"/>
    <property type="project" value="UniProtKB-SubCell"/>
</dbReference>
<dbReference type="GO" id="GO:0003755">
    <property type="term" value="F:peptidyl-prolyl cis-trans isomerase activity"/>
    <property type="evidence" value="ECO:0007669"/>
    <property type="project" value="UniProtKB-UniRule"/>
</dbReference>
<dbReference type="GO" id="GO:0051301">
    <property type="term" value="P:cell division"/>
    <property type="evidence" value="ECO:0007669"/>
    <property type="project" value="UniProtKB-KW"/>
</dbReference>
<dbReference type="GO" id="GO:0006457">
    <property type="term" value="P:protein folding"/>
    <property type="evidence" value="ECO:0007669"/>
    <property type="project" value="UniProtKB-UniRule"/>
</dbReference>
<dbReference type="GO" id="GO:0015031">
    <property type="term" value="P:protein transport"/>
    <property type="evidence" value="ECO:0007669"/>
    <property type="project" value="UniProtKB-UniRule"/>
</dbReference>
<dbReference type="FunFam" id="3.10.50.40:FF:000058">
    <property type="entry name" value="Trigger factor"/>
    <property type="match status" value="1"/>
</dbReference>
<dbReference type="Gene3D" id="3.10.50.40">
    <property type="match status" value="1"/>
</dbReference>
<dbReference type="Gene3D" id="3.30.70.1050">
    <property type="entry name" value="Trigger factor ribosome-binding domain"/>
    <property type="match status" value="1"/>
</dbReference>
<dbReference type="Gene3D" id="1.10.3120.10">
    <property type="entry name" value="Trigger factor, C-terminal domain"/>
    <property type="match status" value="1"/>
</dbReference>
<dbReference type="HAMAP" id="MF_00303">
    <property type="entry name" value="Trigger_factor_Tig"/>
    <property type="match status" value="1"/>
</dbReference>
<dbReference type="InterPro" id="IPR046357">
    <property type="entry name" value="PPIase_dom_sf"/>
</dbReference>
<dbReference type="InterPro" id="IPR005215">
    <property type="entry name" value="Trig_fac"/>
</dbReference>
<dbReference type="InterPro" id="IPR008880">
    <property type="entry name" value="Trigger_fac_C"/>
</dbReference>
<dbReference type="InterPro" id="IPR037041">
    <property type="entry name" value="Trigger_fac_C_sf"/>
</dbReference>
<dbReference type="InterPro" id="IPR008881">
    <property type="entry name" value="Trigger_fac_ribosome-bd_bac"/>
</dbReference>
<dbReference type="InterPro" id="IPR036611">
    <property type="entry name" value="Trigger_fac_ribosome-bd_sf"/>
</dbReference>
<dbReference type="InterPro" id="IPR027304">
    <property type="entry name" value="Trigger_fact/SurA_dom_sf"/>
</dbReference>
<dbReference type="NCBIfam" id="TIGR00115">
    <property type="entry name" value="tig"/>
    <property type="match status" value="1"/>
</dbReference>
<dbReference type="Pfam" id="PF05698">
    <property type="entry name" value="Trigger_C"/>
    <property type="match status" value="1"/>
</dbReference>
<dbReference type="Pfam" id="PF05697">
    <property type="entry name" value="Trigger_N"/>
    <property type="match status" value="1"/>
</dbReference>
<dbReference type="PIRSF" id="PIRSF003095">
    <property type="entry name" value="Trigger_factor"/>
    <property type="match status" value="1"/>
</dbReference>
<dbReference type="SUPFAM" id="SSF109998">
    <property type="entry name" value="Triger factor/SurA peptide-binding domain-like"/>
    <property type="match status" value="1"/>
</dbReference>
<dbReference type="SUPFAM" id="SSF102735">
    <property type="entry name" value="Trigger factor ribosome-binding domain"/>
    <property type="match status" value="1"/>
</dbReference>
<comment type="function">
    <text evidence="1">Involved in protein export. Acts as a chaperone by maintaining the newly synthesized protein in an open conformation. Functions as a peptidyl-prolyl cis-trans isomerase.</text>
</comment>
<comment type="catalytic activity">
    <reaction evidence="1">
        <text>[protein]-peptidylproline (omega=180) = [protein]-peptidylproline (omega=0)</text>
        <dbReference type="Rhea" id="RHEA:16237"/>
        <dbReference type="Rhea" id="RHEA-COMP:10747"/>
        <dbReference type="Rhea" id="RHEA-COMP:10748"/>
        <dbReference type="ChEBI" id="CHEBI:83833"/>
        <dbReference type="ChEBI" id="CHEBI:83834"/>
        <dbReference type="EC" id="5.2.1.8"/>
    </reaction>
</comment>
<comment type="subcellular location">
    <subcellularLocation>
        <location>Cytoplasm</location>
    </subcellularLocation>
    <text evidence="1">About half TF is bound to the ribosome near the polypeptide exit tunnel while the other half is free in the cytoplasm.</text>
</comment>
<comment type="domain">
    <text evidence="1">Consists of 3 domains; the N-terminus binds the ribosome, the middle domain has PPIase activity, while the C-terminus has intrinsic chaperone activity on its own.</text>
</comment>
<comment type="similarity">
    <text evidence="1">Belongs to the FKBP-type PPIase family. Tig subfamily.</text>
</comment>
<evidence type="ECO:0000255" key="1">
    <source>
        <dbReference type="HAMAP-Rule" id="MF_00303"/>
    </source>
</evidence>
<protein>
    <recommendedName>
        <fullName evidence="1">Trigger factor</fullName>
        <shortName evidence="1">TF</shortName>
        <ecNumber evidence="1">5.2.1.8</ecNumber>
    </recommendedName>
    <alternativeName>
        <fullName evidence="1">PPIase</fullName>
    </alternativeName>
</protein>